<name>FOLD_XANOP</name>
<evidence type="ECO:0000255" key="1">
    <source>
        <dbReference type="HAMAP-Rule" id="MF_01576"/>
    </source>
</evidence>
<organism>
    <name type="scientific">Xanthomonas oryzae pv. oryzae (strain PXO99A)</name>
    <dbReference type="NCBI Taxonomy" id="360094"/>
    <lineage>
        <taxon>Bacteria</taxon>
        <taxon>Pseudomonadati</taxon>
        <taxon>Pseudomonadota</taxon>
        <taxon>Gammaproteobacteria</taxon>
        <taxon>Lysobacterales</taxon>
        <taxon>Lysobacteraceae</taxon>
        <taxon>Xanthomonas</taxon>
    </lineage>
</organism>
<keyword id="KW-0028">Amino-acid biosynthesis</keyword>
<keyword id="KW-0368">Histidine biosynthesis</keyword>
<keyword id="KW-0378">Hydrolase</keyword>
<keyword id="KW-0486">Methionine biosynthesis</keyword>
<keyword id="KW-0511">Multifunctional enzyme</keyword>
<keyword id="KW-0521">NADP</keyword>
<keyword id="KW-0554">One-carbon metabolism</keyword>
<keyword id="KW-0560">Oxidoreductase</keyword>
<keyword id="KW-0658">Purine biosynthesis</keyword>
<gene>
    <name evidence="1" type="primary">folD</name>
    <name type="ordered locus">PXO_00904</name>
</gene>
<accession>B2SLG3</accession>
<feature type="chain" id="PRO_1000147538" description="Bifunctional protein FolD">
    <location>
        <begin position="1"/>
        <end position="303"/>
    </location>
</feature>
<feature type="binding site" evidence="1">
    <location>
        <begin position="175"/>
        <end position="177"/>
    </location>
    <ligand>
        <name>NADP(+)</name>
        <dbReference type="ChEBI" id="CHEBI:58349"/>
    </ligand>
</feature>
<feature type="binding site" evidence="1">
    <location>
        <position position="243"/>
    </location>
    <ligand>
        <name>NADP(+)</name>
        <dbReference type="ChEBI" id="CHEBI:58349"/>
    </ligand>
</feature>
<proteinExistence type="inferred from homology"/>
<dbReference type="EC" id="1.5.1.5" evidence="1"/>
<dbReference type="EC" id="3.5.4.9" evidence="1"/>
<dbReference type="EMBL" id="CP000967">
    <property type="protein sequence ID" value="ACD59025.1"/>
    <property type="molecule type" value="Genomic_DNA"/>
</dbReference>
<dbReference type="RefSeq" id="WP_011258888.1">
    <property type="nucleotide sequence ID" value="NC_010717.2"/>
</dbReference>
<dbReference type="SMR" id="B2SLG3"/>
<dbReference type="GeneID" id="77337247"/>
<dbReference type="KEGG" id="xop:PXO_00904"/>
<dbReference type="eggNOG" id="COG0190">
    <property type="taxonomic scope" value="Bacteria"/>
</dbReference>
<dbReference type="HOGENOM" id="CLU_034045_2_1_6"/>
<dbReference type="UniPathway" id="UPA00193"/>
<dbReference type="Proteomes" id="UP000001740">
    <property type="component" value="Chromosome"/>
</dbReference>
<dbReference type="GO" id="GO:0005829">
    <property type="term" value="C:cytosol"/>
    <property type="evidence" value="ECO:0007669"/>
    <property type="project" value="TreeGrafter"/>
</dbReference>
<dbReference type="GO" id="GO:0004477">
    <property type="term" value="F:methenyltetrahydrofolate cyclohydrolase activity"/>
    <property type="evidence" value="ECO:0007669"/>
    <property type="project" value="UniProtKB-UniRule"/>
</dbReference>
<dbReference type="GO" id="GO:0004488">
    <property type="term" value="F:methylenetetrahydrofolate dehydrogenase (NADP+) activity"/>
    <property type="evidence" value="ECO:0007669"/>
    <property type="project" value="UniProtKB-UniRule"/>
</dbReference>
<dbReference type="GO" id="GO:0000105">
    <property type="term" value="P:L-histidine biosynthetic process"/>
    <property type="evidence" value="ECO:0007669"/>
    <property type="project" value="UniProtKB-KW"/>
</dbReference>
<dbReference type="GO" id="GO:0009086">
    <property type="term" value="P:methionine biosynthetic process"/>
    <property type="evidence" value="ECO:0007669"/>
    <property type="project" value="UniProtKB-KW"/>
</dbReference>
<dbReference type="GO" id="GO:0006164">
    <property type="term" value="P:purine nucleotide biosynthetic process"/>
    <property type="evidence" value="ECO:0007669"/>
    <property type="project" value="UniProtKB-KW"/>
</dbReference>
<dbReference type="GO" id="GO:0035999">
    <property type="term" value="P:tetrahydrofolate interconversion"/>
    <property type="evidence" value="ECO:0007669"/>
    <property type="project" value="UniProtKB-UniRule"/>
</dbReference>
<dbReference type="CDD" id="cd01080">
    <property type="entry name" value="NAD_bind_m-THF_DH_Cyclohyd"/>
    <property type="match status" value="1"/>
</dbReference>
<dbReference type="FunFam" id="3.40.50.720:FF:000006">
    <property type="entry name" value="Bifunctional protein FolD"/>
    <property type="match status" value="1"/>
</dbReference>
<dbReference type="FunFam" id="3.40.50.10860:FF:000005">
    <property type="entry name" value="C-1-tetrahydrofolate synthase, cytoplasmic, putative"/>
    <property type="match status" value="1"/>
</dbReference>
<dbReference type="Gene3D" id="3.40.50.10860">
    <property type="entry name" value="Leucine Dehydrogenase, chain A, domain 1"/>
    <property type="match status" value="1"/>
</dbReference>
<dbReference type="Gene3D" id="3.40.50.720">
    <property type="entry name" value="NAD(P)-binding Rossmann-like Domain"/>
    <property type="match status" value="1"/>
</dbReference>
<dbReference type="HAMAP" id="MF_01576">
    <property type="entry name" value="THF_DHG_CYH"/>
    <property type="match status" value="1"/>
</dbReference>
<dbReference type="InterPro" id="IPR046346">
    <property type="entry name" value="Aminoacid_DH-like_N_sf"/>
</dbReference>
<dbReference type="InterPro" id="IPR036291">
    <property type="entry name" value="NAD(P)-bd_dom_sf"/>
</dbReference>
<dbReference type="InterPro" id="IPR000672">
    <property type="entry name" value="THF_DH/CycHdrlase"/>
</dbReference>
<dbReference type="InterPro" id="IPR020630">
    <property type="entry name" value="THF_DH/CycHdrlase_cat_dom"/>
</dbReference>
<dbReference type="InterPro" id="IPR020867">
    <property type="entry name" value="THF_DH/CycHdrlase_CS"/>
</dbReference>
<dbReference type="InterPro" id="IPR020631">
    <property type="entry name" value="THF_DH/CycHdrlase_NAD-bd_dom"/>
</dbReference>
<dbReference type="NCBIfam" id="NF008058">
    <property type="entry name" value="PRK10792.1"/>
    <property type="match status" value="1"/>
</dbReference>
<dbReference type="PANTHER" id="PTHR48099:SF5">
    <property type="entry name" value="C-1-TETRAHYDROFOLATE SYNTHASE, CYTOPLASMIC"/>
    <property type="match status" value="1"/>
</dbReference>
<dbReference type="PANTHER" id="PTHR48099">
    <property type="entry name" value="C-1-TETRAHYDROFOLATE SYNTHASE, CYTOPLASMIC-RELATED"/>
    <property type="match status" value="1"/>
</dbReference>
<dbReference type="Pfam" id="PF00763">
    <property type="entry name" value="THF_DHG_CYH"/>
    <property type="match status" value="1"/>
</dbReference>
<dbReference type="Pfam" id="PF02882">
    <property type="entry name" value="THF_DHG_CYH_C"/>
    <property type="match status" value="1"/>
</dbReference>
<dbReference type="PRINTS" id="PR00085">
    <property type="entry name" value="THFDHDRGNASE"/>
</dbReference>
<dbReference type="SUPFAM" id="SSF53223">
    <property type="entry name" value="Aminoacid dehydrogenase-like, N-terminal domain"/>
    <property type="match status" value="1"/>
</dbReference>
<dbReference type="SUPFAM" id="SSF51735">
    <property type="entry name" value="NAD(P)-binding Rossmann-fold domains"/>
    <property type="match status" value="1"/>
</dbReference>
<dbReference type="PROSITE" id="PS00767">
    <property type="entry name" value="THF_DHG_CYH_2"/>
    <property type="match status" value="1"/>
</dbReference>
<comment type="function">
    <text evidence="1">Catalyzes the oxidation of 5,10-methylenetetrahydrofolate to 5,10-methenyltetrahydrofolate and then the hydrolysis of 5,10-methenyltetrahydrofolate to 10-formyltetrahydrofolate.</text>
</comment>
<comment type="catalytic activity">
    <reaction evidence="1">
        <text>(6R)-5,10-methylene-5,6,7,8-tetrahydrofolate + NADP(+) = (6R)-5,10-methenyltetrahydrofolate + NADPH</text>
        <dbReference type="Rhea" id="RHEA:22812"/>
        <dbReference type="ChEBI" id="CHEBI:15636"/>
        <dbReference type="ChEBI" id="CHEBI:57455"/>
        <dbReference type="ChEBI" id="CHEBI:57783"/>
        <dbReference type="ChEBI" id="CHEBI:58349"/>
        <dbReference type="EC" id="1.5.1.5"/>
    </reaction>
</comment>
<comment type="catalytic activity">
    <reaction evidence="1">
        <text>(6R)-5,10-methenyltetrahydrofolate + H2O = (6R)-10-formyltetrahydrofolate + H(+)</text>
        <dbReference type="Rhea" id="RHEA:23700"/>
        <dbReference type="ChEBI" id="CHEBI:15377"/>
        <dbReference type="ChEBI" id="CHEBI:15378"/>
        <dbReference type="ChEBI" id="CHEBI:57455"/>
        <dbReference type="ChEBI" id="CHEBI:195366"/>
        <dbReference type="EC" id="3.5.4.9"/>
    </reaction>
</comment>
<comment type="pathway">
    <text evidence="1">One-carbon metabolism; tetrahydrofolate interconversion.</text>
</comment>
<comment type="subunit">
    <text evidence="1">Homodimer.</text>
</comment>
<comment type="similarity">
    <text evidence="1">Belongs to the tetrahydrofolate dehydrogenase/cyclohydrolase family.</text>
</comment>
<protein>
    <recommendedName>
        <fullName evidence="1">Bifunctional protein FolD</fullName>
    </recommendedName>
    <domain>
        <recommendedName>
            <fullName evidence="1">Methylenetetrahydrofolate dehydrogenase</fullName>
            <ecNumber evidence="1">1.5.1.5</ecNumber>
        </recommendedName>
    </domain>
    <domain>
        <recommendedName>
            <fullName evidence="1">Methenyltetrahydrofolate cyclohydrolase</fullName>
            <ecNumber evidence="1">3.5.4.9</ecNumber>
        </recommendedName>
    </domain>
</protein>
<reference key="1">
    <citation type="journal article" date="2008" name="BMC Genomics">
        <title>Genome sequence and rapid evolution of the rice pathogen Xanthomonas oryzae pv. oryzae PXO99A.</title>
        <authorList>
            <person name="Salzberg S.L."/>
            <person name="Sommer D.D."/>
            <person name="Schatz M.C."/>
            <person name="Phillippy A.M."/>
            <person name="Rabinowicz P.D."/>
            <person name="Tsuge S."/>
            <person name="Furutani A."/>
            <person name="Ochiai H."/>
            <person name="Delcher A.L."/>
            <person name="Kelley D."/>
            <person name="Madupu R."/>
            <person name="Puiu D."/>
            <person name="Radune D."/>
            <person name="Shumway M."/>
            <person name="Trapnell C."/>
            <person name="Aparna G."/>
            <person name="Jha G."/>
            <person name="Pandey A."/>
            <person name="Patil P.B."/>
            <person name="Ishihara H."/>
            <person name="Meyer D.F."/>
            <person name="Szurek B."/>
            <person name="Verdier V."/>
            <person name="Koebnik R."/>
            <person name="Dow J.M."/>
            <person name="Ryan R.P."/>
            <person name="Hirata H."/>
            <person name="Tsuyumu S."/>
            <person name="Won Lee S."/>
            <person name="Seo Y.-S."/>
            <person name="Sriariyanum M."/>
            <person name="Ronald P.C."/>
            <person name="Sonti R.V."/>
            <person name="Van Sluys M.-A."/>
            <person name="Leach J.E."/>
            <person name="White F.F."/>
            <person name="Bogdanove A.J."/>
        </authorList>
    </citation>
    <scope>NUCLEOTIDE SEQUENCE [LARGE SCALE GENOMIC DNA]</scope>
    <source>
        <strain>PXO99A</strain>
    </source>
</reference>
<sequence>MTASAPAASTSARLLDGRRIAEELLDGLKSRVDARLAAGKARPGLAVVLVGGDPASSVYVRNKRRAAEKVGIEAFDYDLPQCTSEAELAALIDELNADPKIHGILIQLPLPGIPDANRLIQRIDPRKDVDGFHPQNVGHLALREFGLRPCTPRGIVTLLSHTDQPVRGRNATIVGVSNHVGRPMGLELLIAGCTVTSCHKFTPPDVLEASVRNADILVVAVGRPGLIPGEWVKPGAVVIDVGINRLDDGRLVGDVGFDAAAQRAAWITPVPGGVGPMTVATLMQNTIEAADAAGIEGAGVGIR</sequence>